<accession>P9WQK2</accession>
<accession>L0T9X4</accession>
<accession>O53204</accession>
<accession>Q7D727</accession>
<comment type="function">
    <text evidence="1">A translation factor that gates the progression of the 70S ribosomal initiation complex (IC, containing tRNA(fMet) in the P-site) into the translation elongation cycle by using a mechanism sensitive to the ATP/ADP ratio. Binds to the 70S ribosome E-site where it modulates the state of the translating ribosome during subunit translocation. ATP hydrolysis probably frees it from the ribosome, which can enter the elongation phase.</text>
</comment>
<comment type="catalytic activity">
    <reaction evidence="1">
        <text>ATP + H2O = ADP + phosphate + H(+)</text>
        <dbReference type="Rhea" id="RHEA:13065"/>
        <dbReference type="ChEBI" id="CHEBI:15377"/>
        <dbReference type="ChEBI" id="CHEBI:15378"/>
        <dbReference type="ChEBI" id="CHEBI:30616"/>
        <dbReference type="ChEBI" id="CHEBI:43474"/>
        <dbReference type="ChEBI" id="CHEBI:456216"/>
    </reaction>
</comment>
<comment type="subunit">
    <text evidence="1">Monomer. Probably contacts ribosomal proteins L1, L5, L33 and S7, the 16S and 23S rRNA and the P-site containing tRNA(fMet).</text>
</comment>
<comment type="subcellular location">
    <subcellularLocation>
        <location evidence="1">Cytoplasm</location>
    </subcellularLocation>
    <text evidence="1">Associates with ribosomes and polysomes.</text>
</comment>
<comment type="domain">
    <text evidence="1">The arm domain is inserted in the first ABC transporter domain. Probably contacts ribosomal protein L1.</text>
</comment>
<comment type="domain">
    <text evidence="1">The P-site tRNA interaction motif (PtIM domain) probably interacts with the P-site tRNA(fMet) as well as the 23S rRNA.</text>
</comment>
<comment type="similarity">
    <text evidence="1 2">Belongs to the ABC transporter superfamily. ABCF family. Translational throttle EttA subfamily.</text>
</comment>
<name>ETTA_MYCTO</name>
<sequence>MAEFIYTMKKVRKAHGDKVILDDVTLSFYPGAKIGVVGPNGAGKSSVLRIMAGLDKPNNGDAFLATGATVGILQQEPPLNEDKTVRGNVEEGMGDIKIKLDRFNEVAELMATDYTDELMEEMGRLQEELDHADAWDLDAQLEQAMDALRCPPADEPVTNLSGGERRRVALCKLLLSKPDLLLLDEPTNHLDAESVQWLEQHLASYPGAILAVTHDRYFLDNVAEWILELDRGRAYPYEGNYSTYLEKKAERLAVQGRKDAKLQKRLTEELAWVRSGAKARQAKSKARLQRYEEMAAEAEKTRKLDFEEIQIPVGPRLGNVVVEVDHLDKGYDGRALIKDLSFSLPRNGIVGVIGPNGVGKTTLFKTIVGLETPDSGSVKVGETVKLSYVDQARAGIDPRKTVWEVVSDGLDYIQVGQTEVPSRAYVSAFGFKGPDQQKPAGVLSGGERNRLNLALTLKQGGNLILLDEPTNDLDVETLGSLENALLNFPGCAVVISHDRWFLDRTCTHILAWEGDDDNEAKWFWFEGNFGAYEENKVERLGVDAARPHRVTHRKLTRG</sequence>
<protein>
    <recommendedName>
        <fullName evidence="1">Energy-dependent translational throttle protein EttA</fullName>
        <ecNumber evidence="1">3.6.1.-</ecNumber>
    </recommendedName>
    <alternativeName>
        <fullName evidence="1">Translational regulatory factor EttA</fullName>
    </alternativeName>
</protein>
<organism>
    <name type="scientific">Mycobacterium tuberculosis (strain CDC 1551 / Oshkosh)</name>
    <dbReference type="NCBI Taxonomy" id="83331"/>
    <lineage>
        <taxon>Bacteria</taxon>
        <taxon>Bacillati</taxon>
        <taxon>Actinomycetota</taxon>
        <taxon>Actinomycetes</taxon>
        <taxon>Mycobacteriales</taxon>
        <taxon>Mycobacteriaceae</taxon>
        <taxon>Mycobacterium</taxon>
        <taxon>Mycobacterium tuberculosis complex</taxon>
    </lineage>
</organism>
<reference key="1">
    <citation type="journal article" date="2002" name="J. Bacteriol.">
        <title>Whole-genome comparison of Mycobacterium tuberculosis clinical and laboratory strains.</title>
        <authorList>
            <person name="Fleischmann R.D."/>
            <person name="Alland D."/>
            <person name="Eisen J.A."/>
            <person name="Carpenter L."/>
            <person name="White O."/>
            <person name="Peterson J.D."/>
            <person name="DeBoy R.T."/>
            <person name="Dodson R.J."/>
            <person name="Gwinn M.L."/>
            <person name="Haft D.H."/>
            <person name="Hickey E.K."/>
            <person name="Kolonay J.F."/>
            <person name="Nelson W.C."/>
            <person name="Umayam L.A."/>
            <person name="Ermolaeva M.D."/>
            <person name="Salzberg S.L."/>
            <person name="Delcher A."/>
            <person name="Utterback T.R."/>
            <person name="Weidman J.F."/>
            <person name="Khouri H.M."/>
            <person name="Gill J."/>
            <person name="Mikula A."/>
            <person name="Bishai W."/>
            <person name="Jacobs W.R. Jr."/>
            <person name="Venter J.C."/>
            <person name="Fraser C.M."/>
        </authorList>
    </citation>
    <scope>NUCLEOTIDE SEQUENCE [LARGE SCALE GENOMIC DNA]</scope>
    <source>
        <strain>CDC 1551 / Oshkosh</strain>
    </source>
</reference>
<gene>
    <name evidence="1" type="primary">ettA</name>
    <name type="ordered locus">MT2552</name>
</gene>
<dbReference type="EC" id="3.6.1.-" evidence="1"/>
<dbReference type="EMBL" id="AE000516">
    <property type="protein sequence ID" value="AAK46854.1"/>
    <property type="molecule type" value="Genomic_DNA"/>
</dbReference>
<dbReference type="PIR" id="D70867">
    <property type="entry name" value="D70867"/>
</dbReference>
<dbReference type="RefSeq" id="WP_003412708.1">
    <property type="nucleotide sequence ID" value="NZ_KK341227.1"/>
</dbReference>
<dbReference type="SMR" id="P9WQK2"/>
<dbReference type="GeneID" id="45426470"/>
<dbReference type="KEGG" id="mtc:MT2552"/>
<dbReference type="PATRIC" id="fig|83331.31.peg.2754"/>
<dbReference type="HOGENOM" id="CLU_000604_36_0_11"/>
<dbReference type="Proteomes" id="UP000001020">
    <property type="component" value="Chromosome"/>
</dbReference>
<dbReference type="GO" id="GO:0005737">
    <property type="term" value="C:cytoplasm"/>
    <property type="evidence" value="ECO:0007669"/>
    <property type="project" value="UniProtKB-SubCell"/>
</dbReference>
<dbReference type="GO" id="GO:0005524">
    <property type="term" value="F:ATP binding"/>
    <property type="evidence" value="ECO:0007669"/>
    <property type="project" value="UniProtKB-UniRule"/>
</dbReference>
<dbReference type="GO" id="GO:0016887">
    <property type="term" value="F:ATP hydrolysis activity"/>
    <property type="evidence" value="ECO:0007669"/>
    <property type="project" value="UniProtKB-UniRule"/>
</dbReference>
<dbReference type="GO" id="GO:0043022">
    <property type="term" value="F:ribosome binding"/>
    <property type="evidence" value="ECO:0007669"/>
    <property type="project" value="UniProtKB-UniRule"/>
</dbReference>
<dbReference type="GO" id="GO:0019843">
    <property type="term" value="F:rRNA binding"/>
    <property type="evidence" value="ECO:0007669"/>
    <property type="project" value="UniProtKB-UniRule"/>
</dbReference>
<dbReference type="GO" id="GO:0000049">
    <property type="term" value="F:tRNA binding"/>
    <property type="evidence" value="ECO:0007669"/>
    <property type="project" value="UniProtKB-UniRule"/>
</dbReference>
<dbReference type="GO" id="GO:0045900">
    <property type="term" value="P:negative regulation of translational elongation"/>
    <property type="evidence" value="ECO:0007669"/>
    <property type="project" value="UniProtKB-UniRule"/>
</dbReference>
<dbReference type="GO" id="GO:0006412">
    <property type="term" value="P:translation"/>
    <property type="evidence" value="ECO:0007669"/>
    <property type="project" value="UniProtKB-KW"/>
</dbReference>
<dbReference type="CDD" id="cd03221">
    <property type="entry name" value="ABCF_EF-3"/>
    <property type="match status" value="2"/>
</dbReference>
<dbReference type="FunFam" id="3.40.50.300:FF:000183">
    <property type="entry name" value="ABC transporter ATP-binding protein yjjK"/>
    <property type="match status" value="1"/>
</dbReference>
<dbReference type="FunFam" id="3.40.50.300:FF:000011">
    <property type="entry name" value="Putative ABC transporter ATP-binding component"/>
    <property type="match status" value="1"/>
</dbReference>
<dbReference type="Gene3D" id="3.40.50.300">
    <property type="entry name" value="P-loop containing nucleotide triphosphate hydrolases"/>
    <property type="match status" value="2"/>
</dbReference>
<dbReference type="HAMAP" id="MF_00847">
    <property type="entry name" value="EttA"/>
    <property type="match status" value="1"/>
</dbReference>
<dbReference type="InterPro" id="IPR003593">
    <property type="entry name" value="AAA+_ATPase"/>
</dbReference>
<dbReference type="InterPro" id="IPR032781">
    <property type="entry name" value="ABC_tran_Xtn"/>
</dbReference>
<dbReference type="InterPro" id="IPR003439">
    <property type="entry name" value="ABC_transporter-like_ATP-bd"/>
</dbReference>
<dbReference type="InterPro" id="IPR017871">
    <property type="entry name" value="ABC_transporter-like_CS"/>
</dbReference>
<dbReference type="InterPro" id="IPR022374">
    <property type="entry name" value="EttA"/>
</dbReference>
<dbReference type="InterPro" id="IPR027417">
    <property type="entry name" value="P-loop_NTPase"/>
</dbReference>
<dbReference type="NCBIfam" id="TIGR03719">
    <property type="entry name" value="ABC_ABC_ChvD"/>
    <property type="match status" value="1"/>
</dbReference>
<dbReference type="NCBIfam" id="NF008775">
    <property type="entry name" value="PRK11819.1"/>
    <property type="match status" value="1"/>
</dbReference>
<dbReference type="PANTHER" id="PTHR43858:SF1">
    <property type="entry name" value="ABC TRANSPORTER-RELATED PROTEIN"/>
    <property type="match status" value="1"/>
</dbReference>
<dbReference type="PANTHER" id="PTHR43858">
    <property type="entry name" value="ENERGY-DEPENDENT TRANSLATIONAL THROTTLE PROTEIN ETTA"/>
    <property type="match status" value="1"/>
</dbReference>
<dbReference type="Pfam" id="PF00005">
    <property type="entry name" value="ABC_tran"/>
    <property type="match status" value="2"/>
</dbReference>
<dbReference type="Pfam" id="PF12848">
    <property type="entry name" value="ABC_tran_Xtn"/>
    <property type="match status" value="1"/>
</dbReference>
<dbReference type="SMART" id="SM00382">
    <property type="entry name" value="AAA"/>
    <property type="match status" value="2"/>
</dbReference>
<dbReference type="SUPFAM" id="SSF52540">
    <property type="entry name" value="P-loop containing nucleoside triphosphate hydrolases"/>
    <property type="match status" value="2"/>
</dbReference>
<dbReference type="PROSITE" id="PS00211">
    <property type="entry name" value="ABC_TRANSPORTER_1"/>
    <property type="match status" value="2"/>
</dbReference>
<dbReference type="PROSITE" id="PS50893">
    <property type="entry name" value="ABC_TRANSPORTER_2"/>
    <property type="match status" value="2"/>
</dbReference>
<proteinExistence type="inferred from homology"/>
<feature type="chain" id="PRO_0000426761" description="Energy-dependent translational throttle protein EttA">
    <location>
        <begin position="1"/>
        <end position="558"/>
    </location>
</feature>
<feature type="domain" description="ABC transporter 1" evidence="1">
    <location>
        <begin position="6"/>
        <end position="256"/>
    </location>
</feature>
<feature type="domain" description="ABC transporter 2" evidence="1">
    <location>
        <begin position="322"/>
        <end position="552"/>
    </location>
</feature>
<feature type="region of interest" description="Arm" evidence="1">
    <location>
        <begin position="94"/>
        <end position="136"/>
    </location>
</feature>
<feature type="region of interest" description="PtIM" evidence="1">
    <location>
        <begin position="239"/>
        <end position="320"/>
    </location>
</feature>
<feature type="binding site" evidence="1">
    <location>
        <begin position="38"/>
        <end position="45"/>
    </location>
    <ligand>
        <name>ATP</name>
        <dbReference type="ChEBI" id="CHEBI:30616"/>
        <label>1</label>
    </ligand>
</feature>
<feature type="binding site" evidence="1">
    <location>
        <begin position="354"/>
        <end position="361"/>
    </location>
    <ligand>
        <name>ATP</name>
        <dbReference type="ChEBI" id="CHEBI:30616"/>
        <label>2</label>
    </ligand>
</feature>
<keyword id="KW-0067">ATP-binding</keyword>
<keyword id="KW-0963">Cytoplasm</keyword>
<keyword id="KW-0378">Hydrolase</keyword>
<keyword id="KW-0547">Nucleotide-binding</keyword>
<keyword id="KW-0648">Protein biosynthesis</keyword>
<keyword id="KW-1185">Reference proteome</keyword>
<keyword id="KW-0677">Repeat</keyword>
<keyword id="KW-0694">RNA-binding</keyword>
<keyword id="KW-0699">rRNA-binding</keyword>
<keyword id="KW-0810">Translation regulation</keyword>
<keyword id="KW-0820">tRNA-binding</keyword>
<evidence type="ECO:0000255" key="1">
    <source>
        <dbReference type="HAMAP-Rule" id="MF_00847"/>
    </source>
</evidence>
<evidence type="ECO:0000305" key="2"/>